<keyword id="KW-1185">Reference proteome</keyword>
<keyword id="KW-0687">Ribonucleoprotein</keyword>
<keyword id="KW-0689">Ribosomal protein</keyword>
<keyword id="KW-0694">RNA-binding</keyword>
<keyword id="KW-0699">rRNA-binding</keyword>
<proteinExistence type="inferred from homology"/>
<gene>
    <name evidence="1" type="primary">rpl2</name>
    <name type="ordered locus">UNCMA_06490</name>
    <name type="ORF">RCIX2544</name>
</gene>
<feature type="chain" id="PRO_0000310060" description="Large ribosomal subunit protein uL2">
    <location>
        <begin position="1"/>
        <end position="238"/>
    </location>
</feature>
<feature type="region of interest" description="Disordered" evidence="2">
    <location>
        <begin position="201"/>
        <end position="238"/>
    </location>
</feature>
<evidence type="ECO:0000255" key="1">
    <source>
        <dbReference type="HAMAP-Rule" id="MF_01320"/>
    </source>
</evidence>
<evidence type="ECO:0000256" key="2">
    <source>
        <dbReference type="SAM" id="MobiDB-lite"/>
    </source>
</evidence>
<evidence type="ECO:0000305" key="3"/>
<dbReference type="EMBL" id="AM114193">
    <property type="protein sequence ID" value="CAJ37607.1"/>
    <property type="molecule type" value="Genomic_DNA"/>
</dbReference>
<dbReference type="RefSeq" id="WP_012034978.1">
    <property type="nucleotide sequence ID" value="NC_009464.1"/>
</dbReference>
<dbReference type="SMR" id="Q0W1Y6"/>
<dbReference type="STRING" id="351160.RCIX2544"/>
<dbReference type="GeneID" id="5144843"/>
<dbReference type="KEGG" id="rci:RCIX2544"/>
<dbReference type="PATRIC" id="fig|351160.9.peg.676"/>
<dbReference type="eggNOG" id="arCOG04067">
    <property type="taxonomic scope" value="Archaea"/>
</dbReference>
<dbReference type="OrthoDB" id="5987at2157"/>
<dbReference type="Proteomes" id="UP000000663">
    <property type="component" value="Chromosome"/>
</dbReference>
<dbReference type="GO" id="GO:0022625">
    <property type="term" value="C:cytosolic large ribosomal subunit"/>
    <property type="evidence" value="ECO:0007669"/>
    <property type="project" value="TreeGrafter"/>
</dbReference>
<dbReference type="GO" id="GO:0019843">
    <property type="term" value="F:rRNA binding"/>
    <property type="evidence" value="ECO:0007669"/>
    <property type="project" value="UniProtKB-UniRule"/>
</dbReference>
<dbReference type="GO" id="GO:0003735">
    <property type="term" value="F:structural constituent of ribosome"/>
    <property type="evidence" value="ECO:0007669"/>
    <property type="project" value="InterPro"/>
</dbReference>
<dbReference type="GO" id="GO:0002181">
    <property type="term" value="P:cytoplasmic translation"/>
    <property type="evidence" value="ECO:0007669"/>
    <property type="project" value="TreeGrafter"/>
</dbReference>
<dbReference type="FunFam" id="4.10.950.10:FF:000002">
    <property type="entry name" value="60S ribosomal protein L2"/>
    <property type="match status" value="1"/>
</dbReference>
<dbReference type="FunFam" id="2.30.30.30:FF:000006">
    <property type="entry name" value="60S ribosomal protein L8"/>
    <property type="match status" value="1"/>
</dbReference>
<dbReference type="Gene3D" id="2.30.30.30">
    <property type="match status" value="1"/>
</dbReference>
<dbReference type="Gene3D" id="2.40.50.140">
    <property type="entry name" value="Nucleic acid-binding proteins"/>
    <property type="match status" value="1"/>
</dbReference>
<dbReference type="Gene3D" id="4.10.950.10">
    <property type="entry name" value="Ribosomal protein L2, domain 3"/>
    <property type="match status" value="1"/>
</dbReference>
<dbReference type="HAMAP" id="MF_01320_A">
    <property type="entry name" value="Ribosomal_uL2_A"/>
    <property type="match status" value="1"/>
</dbReference>
<dbReference type="InterPro" id="IPR012340">
    <property type="entry name" value="NA-bd_OB-fold"/>
</dbReference>
<dbReference type="InterPro" id="IPR014722">
    <property type="entry name" value="Rib_uL2_dom2"/>
</dbReference>
<dbReference type="InterPro" id="IPR002171">
    <property type="entry name" value="Ribosomal_uL2"/>
</dbReference>
<dbReference type="InterPro" id="IPR023672">
    <property type="entry name" value="Ribosomal_uL2_arc_euk"/>
</dbReference>
<dbReference type="InterPro" id="IPR022669">
    <property type="entry name" value="Ribosomal_uL2_C"/>
</dbReference>
<dbReference type="InterPro" id="IPR022671">
    <property type="entry name" value="Ribosomal_uL2_CS"/>
</dbReference>
<dbReference type="InterPro" id="IPR014726">
    <property type="entry name" value="Ribosomal_uL2_dom3"/>
</dbReference>
<dbReference type="InterPro" id="IPR022666">
    <property type="entry name" value="Ribosomal_uL2_RNA-bd_dom"/>
</dbReference>
<dbReference type="InterPro" id="IPR008991">
    <property type="entry name" value="Translation_prot_SH3-like_sf"/>
</dbReference>
<dbReference type="NCBIfam" id="NF007180">
    <property type="entry name" value="PRK09612.1"/>
    <property type="match status" value="1"/>
</dbReference>
<dbReference type="PANTHER" id="PTHR13691:SF16">
    <property type="entry name" value="LARGE RIBOSOMAL SUBUNIT PROTEIN UL2"/>
    <property type="match status" value="1"/>
</dbReference>
<dbReference type="PANTHER" id="PTHR13691">
    <property type="entry name" value="RIBOSOMAL PROTEIN L2"/>
    <property type="match status" value="1"/>
</dbReference>
<dbReference type="Pfam" id="PF00181">
    <property type="entry name" value="Ribosomal_L2"/>
    <property type="match status" value="1"/>
</dbReference>
<dbReference type="Pfam" id="PF03947">
    <property type="entry name" value="Ribosomal_L2_C"/>
    <property type="match status" value="1"/>
</dbReference>
<dbReference type="PIRSF" id="PIRSF002158">
    <property type="entry name" value="Ribosomal_L2"/>
    <property type="match status" value="1"/>
</dbReference>
<dbReference type="SMART" id="SM01383">
    <property type="entry name" value="Ribosomal_L2"/>
    <property type="match status" value="1"/>
</dbReference>
<dbReference type="SMART" id="SM01382">
    <property type="entry name" value="Ribosomal_L2_C"/>
    <property type="match status" value="1"/>
</dbReference>
<dbReference type="SUPFAM" id="SSF50249">
    <property type="entry name" value="Nucleic acid-binding proteins"/>
    <property type="match status" value="1"/>
</dbReference>
<dbReference type="SUPFAM" id="SSF50104">
    <property type="entry name" value="Translation proteins SH3-like domain"/>
    <property type="match status" value="1"/>
</dbReference>
<dbReference type="PROSITE" id="PS00467">
    <property type="entry name" value="RIBOSOMAL_L2"/>
    <property type="match status" value="1"/>
</dbReference>
<reference key="1">
    <citation type="journal article" date="2006" name="Science">
        <title>Genome of rice cluster I archaea -- the key methane producers in the rice rhizosphere.</title>
        <authorList>
            <person name="Erkel C."/>
            <person name="Kube M."/>
            <person name="Reinhardt R."/>
            <person name="Liesack W."/>
        </authorList>
    </citation>
    <scope>NUCLEOTIDE SEQUENCE [LARGE SCALE GENOMIC DNA]</scope>
    <source>
        <strain>DSM 22066 / NBRC 105507 / MRE50</strain>
    </source>
</reference>
<accession>Q0W1Y6</accession>
<comment type="function">
    <text evidence="1">One of the primary rRNA binding proteins. Required for association of the 30S and 50S subunits to form the 70S ribosome, for tRNA binding and peptide bond formation. It has been suggested to have peptidyltransferase activity; this is somewhat controversial. Makes several contacts with the 16S rRNA in the 70S ribosome.</text>
</comment>
<comment type="subunit">
    <text evidence="1">Part of the 50S ribosomal subunit. Forms a bridge to the 30S subunit in the 70S ribosome.</text>
</comment>
<comment type="similarity">
    <text evidence="1">Belongs to the universal ribosomal protein uL2 family.</text>
</comment>
<name>RL2_METAR</name>
<organism>
    <name type="scientific">Methanocella arvoryzae (strain DSM 22066 / NBRC 105507 / MRE50)</name>
    <dbReference type="NCBI Taxonomy" id="351160"/>
    <lineage>
        <taxon>Archaea</taxon>
        <taxon>Methanobacteriati</taxon>
        <taxon>Methanobacteriota</taxon>
        <taxon>Stenosarchaea group</taxon>
        <taxon>Methanomicrobia</taxon>
        <taxon>Methanocellales</taxon>
        <taxon>Methanocellaceae</taxon>
        <taxon>Methanocella</taxon>
    </lineage>
</organism>
<protein>
    <recommendedName>
        <fullName evidence="1">Large ribosomal subunit protein uL2</fullName>
    </recommendedName>
    <alternativeName>
        <fullName evidence="3">50S ribosomal protein L2</fullName>
    </alternativeName>
</protein>
<sequence>MGKRLMSQNRGKGSPTYRATSSRFKADLEHIKTFGDETIEGIITEVVHDPARNCPIIRVKFGNGEERLILAPEGVGVGDKIACGISAEIKPGNTLPLSEIPEGCAICNIESQPGDGGAFARSSGVYAIIVAHEGKKTVVQMPSGEIKRLNPKCRATIGVVAGGGRTEKPFVRAGNKWYKMANKATKWPVVRGVAMNAVDHPFGGGGRQHPGRPKTVSRNTPPGRKVGSIAARRTGVGH</sequence>